<accession>P81311</accession>
<proteinExistence type="predicted"/>
<reference key="1">
    <citation type="journal article" date="1996" name="Science">
        <title>Complete genome sequence of the methanogenic archaeon, Methanococcus jannaschii.</title>
        <authorList>
            <person name="Bult C.J."/>
            <person name="White O."/>
            <person name="Olsen G.J."/>
            <person name="Zhou L."/>
            <person name="Fleischmann R.D."/>
            <person name="Sutton G.G."/>
            <person name="Blake J.A."/>
            <person name="FitzGerald L.M."/>
            <person name="Clayton R.A."/>
            <person name="Gocayne J.D."/>
            <person name="Kerlavage A.R."/>
            <person name="Dougherty B.A."/>
            <person name="Tomb J.-F."/>
            <person name="Adams M.D."/>
            <person name="Reich C.I."/>
            <person name="Overbeek R."/>
            <person name="Kirkness E.F."/>
            <person name="Weinstock K.G."/>
            <person name="Merrick J.M."/>
            <person name="Glodek A."/>
            <person name="Scott J.L."/>
            <person name="Geoghagen N.S.M."/>
            <person name="Weidman J.F."/>
            <person name="Fuhrmann J.L."/>
            <person name="Nguyen D."/>
            <person name="Utterback T.R."/>
            <person name="Kelley J.M."/>
            <person name="Peterson J.D."/>
            <person name="Sadow P.W."/>
            <person name="Hanna M.C."/>
            <person name="Cotton M.D."/>
            <person name="Roberts K.M."/>
            <person name="Hurst M.A."/>
            <person name="Kaine B.P."/>
            <person name="Borodovsky M."/>
            <person name="Klenk H.-P."/>
            <person name="Fraser C.M."/>
            <person name="Smith H.O."/>
            <person name="Woese C.R."/>
            <person name="Venter J.C."/>
        </authorList>
    </citation>
    <scope>NUCLEOTIDE SEQUENCE [LARGE SCALE GENOMIC DNA]</scope>
    <source>
        <strain>ATCC 43067 / DSM 2661 / JAL-1 / JCM 10045 / NBRC 100440</strain>
    </source>
</reference>
<feature type="chain" id="PRO_0000106996" description="Uncharacterized protein MJ0703.1">
    <location>
        <begin position="1"/>
        <end position="102"/>
    </location>
</feature>
<feature type="transmembrane region" description="Helical" evidence="1">
    <location>
        <begin position="14"/>
        <end position="34"/>
    </location>
</feature>
<feature type="transmembrane region" description="Helical" evidence="1">
    <location>
        <begin position="35"/>
        <end position="55"/>
    </location>
</feature>
<feature type="transmembrane region" description="Helical" evidence="1">
    <location>
        <begin position="76"/>
        <end position="96"/>
    </location>
</feature>
<comment type="subcellular location">
    <subcellularLocation>
        <location evidence="2">Cell membrane</location>
        <topology evidence="2">Multi-pass membrane protein</topology>
    </subcellularLocation>
</comment>
<name>Y70A_METJA</name>
<organism>
    <name type="scientific">Methanocaldococcus jannaschii (strain ATCC 43067 / DSM 2661 / JAL-1 / JCM 10045 / NBRC 100440)</name>
    <name type="common">Methanococcus jannaschii</name>
    <dbReference type="NCBI Taxonomy" id="243232"/>
    <lineage>
        <taxon>Archaea</taxon>
        <taxon>Methanobacteriati</taxon>
        <taxon>Methanobacteriota</taxon>
        <taxon>Methanomada group</taxon>
        <taxon>Methanococci</taxon>
        <taxon>Methanococcales</taxon>
        <taxon>Methanocaldococcaceae</taxon>
        <taxon>Methanocaldococcus</taxon>
    </lineage>
</organism>
<gene>
    <name type="ordered locus">MJ0703.1</name>
</gene>
<protein>
    <recommendedName>
        <fullName>Uncharacterized protein MJ0703.1</fullName>
    </recommendedName>
</protein>
<dbReference type="EMBL" id="L77117">
    <property type="protein sequence ID" value="AAB98706.1"/>
    <property type="molecule type" value="Genomic_DNA"/>
</dbReference>
<dbReference type="SMR" id="P81311"/>
<dbReference type="FunCoup" id="P81311">
    <property type="interactions" value="92"/>
</dbReference>
<dbReference type="STRING" id="243232.MJ_0703.1"/>
<dbReference type="PaxDb" id="243232-MJ_0703.1"/>
<dbReference type="EnsemblBacteria" id="AAB98706">
    <property type="protein sequence ID" value="AAB98706"/>
    <property type="gene ID" value="MJ_0703.1"/>
</dbReference>
<dbReference type="KEGG" id="mja:MJ_0703.1"/>
<dbReference type="HOGENOM" id="CLU_2271063_0_0_2"/>
<dbReference type="InParanoid" id="P81311"/>
<dbReference type="Proteomes" id="UP000000805">
    <property type="component" value="Chromosome"/>
</dbReference>
<dbReference type="GO" id="GO:0005886">
    <property type="term" value="C:plasma membrane"/>
    <property type="evidence" value="ECO:0007669"/>
    <property type="project" value="UniProtKB-SubCell"/>
</dbReference>
<keyword id="KW-1003">Cell membrane</keyword>
<keyword id="KW-0472">Membrane</keyword>
<keyword id="KW-1185">Reference proteome</keyword>
<keyword id="KW-0812">Transmembrane</keyword>
<keyword id="KW-1133">Transmembrane helix</keyword>
<evidence type="ECO:0000255" key="1"/>
<evidence type="ECO:0000305" key="2"/>
<sequence length="102" mass="11685">MVGNMNIRDKIKSIKNWINFIKPIITIVGIVISAVAFTISILWGMLFLILFLILITFSKTIRKILSKKERSYQGLILSIIGSIIIISIIVYSHCYIEFKLLI</sequence>